<proteinExistence type="inferred from homology"/>
<name>TMA7_CAEEL</name>
<accession>Q20588</accession>
<reference key="1">
    <citation type="journal article" date="1998" name="Science">
        <title>Genome sequence of the nematode C. elegans: a platform for investigating biology.</title>
        <authorList>
            <consortium name="The C. elegans sequencing consortium"/>
        </authorList>
    </citation>
    <scope>NUCLEOTIDE SEQUENCE [LARGE SCALE GENOMIC DNA]</scope>
    <source>
        <strain>Bristol N2</strain>
    </source>
</reference>
<keyword id="KW-0175">Coiled coil</keyword>
<keyword id="KW-1185">Reference proteome</keyword>
<evidence type="ECO:0000255" key="1"/>
<evidence type="ECO:0000256" key="2">
    <source>
        <dbReference type="SAM" id="MobiDB-lite"/>
    </source>
</evidence>
<evidence type="ECO:0000305" key="3"/>
<organism>
    <name type="scientific">Caenorhabditis elegans</name>
    <dbReference type="NCBI Taxonomy" id="6239"/>
    <lineage>
        <taxon>Eukaryota</taxon>
        <taxon>Metazoa</taxon>
        <taxon>Ecdysozoa</taxon>
        <taxon>Nematoda</taxon>
        <taxon>Chromadorea</taxon>
        <taxon>Rhabditida</taxon>
        <taxon>Rhabditina</taxon>
        <taxon>Rhabditomorpha</taxon>
        <taxon>Rhabditoidea</taxon>
        <taxon>Rhabditidae</taxon>
        <taxon>Peloderinae</taxon>
        <taxon>Caenorhabditis</taxon>
    </lineage>
</organism>
<protein>
    <recommendedName>
        <fullName>Translation machinery-associated protein 7 homolog</fullName>
    </recommendedName>
    <alternativeName>
        <fullName>Coiled-coil domain-containing protein 72 homolog</fullName>
    </alternativeName>
</protein>
<feature type="chain" id="PRO_0000248078" description="Translation machinery-associated protein 7 homolog">
    <location>
        <begin position="1"/>
        <end position="64"/>
    </location>
</feature>
<feature type="region of interest" description="Disordered" evidence="2">
    <location>
        <begin position="1"/>
        <end position="64"/>
    </location>
</feature>
<feature type="coiled-coil region" evidence="1">
    <location>
        <begin position="21"/>
        <end position="50"/>
    </location>
</feature>
<feature type="compositionally biased region" description="Basic and acidic residues" evidence="2">
    <location>
        <begin position="28"/>
        <end position="44"/>
    </location>
</feature>
<feature type="compositionally biased region" description="Gly residues" evidence="2">
    <location>
        <begin position="53"/>
        <end position="64"/>
    </location>
</feature>
<dbReference type="EMBL" id="Z68227">
    <property type="protein sequence ID" value="CAA92514.1"/>
    <property type="molecule type" value="Genomic_DNA"/>
</dbReference>
<dbReference type="PIR" id="T22415">
    <property type="entry name" value="T22415"/>
</dbReference>
<dbReference type="RefSeq" id="NP_501634.1">
    <property type="nucleotide sequence ID" value="NM_069233.9"/>
</dbReference>
<dbReference type="BioGRID" id="42862">
    <property type="interactions" value="4"/>
</dbReference>
<dbReference type="FunCoup" id="Q20588">
    <property type="interactions" value="1221"/>
</dbReference>
<dbReference type="STRING" id="6239.F49C12.11.1"/>
<dbReference type="PaxDb" id="6239-F49C12.11"/>
<dbReference type="PeptideAtlas" id="Q20588"/>
<dbReference type="EnsemblMetazoa" id="F49C12.11.1">
    <property type="protein sequence ID" value="F49C12.11.1"/>
    <property type="gene ID" value="WBGene00009880"/>
</dbReference>
<dbReference type="GeneID" id="177756"/>
<dbReference type="KEGG" id="cel:CELE_F49C12.11"/>
<dbReference type="UCSC" id="F49C12.11.1">
    <property type="organism name" value="c. elegans"/>
</dbReference>
<dbReference type="AGR" id="WB:WBGene00009880"/>
<dbReference type="CTD" id="177756"/>
<dbReference type="WormBase" id="F49C12.11">
    <property type="protein sequence ID" value="CE03371"/>
    <property type="gene ID" value="WBGene00009880"/>
</dbReference>
<dbReference type="eggNOG" id="KOG4766">
    <property type="taxonomic scope" value="Eukaryota"/>
</dbReference>
<dbReference type="HOGENOM" id="CLU_184661_2_0_1"/>
<dbReference type="InParanoid" id="Q20588"/>
<dbReference type="OMA" id="KKGPMNT"/>
<dbReference type="PRO" id="PR:Q20588"/>
<dbReference type="Proteomes" id="UP000001940">
    <property type="component" value="Chromosome IV"/>
</dbReference>
<dbReference type="Bgee" id="WBGene00009880">
    <property type="expression patterns" value="Expressed in embryo and 4 other cell types or tissues"/>
</dbReference>
<dbReference type="InterPro" id="IPR015157">
    <property type="entry name" value="TMA7"/>
</dbReference>
<dbReference type="PANTHER" id="PTHR28632">
    <property type="entry name" value="TRANSLATION MACHINERY-ASSOCIATED PROTEIN 7"/>
    <property type="match status" value="1"/>
</dbReference>
<dbReference type="Pfam" id="PF09072">
    <property type="entry name" value="TMA7"/>
    <property type="match status" value="1"/>
</dbReference>
<comment type="similarity">
    <text evidence="3">Belongs to the TMA7 family.</text>
</comment>
<gene>
    <name type="ORF">F49C12.11</name>
</gene>
<sequence>MSGRQGGKAKPLKAAKKTEKDLSEEDVEFKKKQQEEAKKIKEMAAKAGQRGPLLGGGIKKSGKK</sequence>